<accession>P75208</accession>
<dbReference type="EMBL" id="U00089">
    <property type="protein sequence ID" value="AAB95920.1"/>
    <property type="molecule type" value="Genomic_DNA"/>
</dbReference>
<dbReference type="PIR" id="S73598">
    <property type="entry name" value="S73598"/>
</dbReference>
<dbReference type="RefSeq" id="NP_110259.1">
    <property type="nucleotide sequence ID" value="NC_000912.1"/>
</dbReference>
<dbReference type="RefSeq" id="WP_010874927.1">
    <property type="nucleotide sequence ID" value="NZ_OU342337.1"/>
</dbReference>
<dbReference type="SMR" id="P75208"/>
<dbReference type="STRING" id="272634.MPN_570"/>
<dbReference type="EnsemblBacteria" id="AAB95920">
    <property type="protein sequence ID" value="AAB95920"/>
    <property type="gene ID" value="MPN_570"/>
</dbReference>
<dbReference type="KEGG" id="mpn:MPN_570"/>
<dbReference type="PATRIC" id="fig|272634.6.peg.632"/>
<dbReference type="HOGENOM" id="CLU_1968086_0_0_14"/>
<dbReference type="OrthoDB" id="9967567at2"/>
<dbReference type="BioCyc" id="MPNE272634:G1GJ3-935-MONOMER"/>
<dbReference type="Proteomes" id="UP000000808">
    <property type="component" value="Chromosome"/>
</dbReference>
<dbReference type="GO" id="GO:0016020">
    <property type="term" value="C:membrane"/>
    <property type="evidence" value="ECO:0007669"/>
    <property type="project" value="UniProtKB-SubCell"/>
</dbReference>
<reference key="1">
    <citation type="journal article" date="1996" name="Nucleic Acids Res.">
        <title>Complete sequence analysis of the genome of the bacterium Mycoplasma pneumoniae.</title>
        <authorList>
            <person name="Himmelreich R."/>
            <person name="Hilbert H."/>
            <person name="Plagens H."/>
            <person name="Pirkl E."/>
            <person name="Li B.-C."/>
            <person name="Herrmann R."/>
        </authorList>
    </citation>
    <scope>NUCLEOTIDE SEQUENCE [LARGE SCALE GENOMIC DNA]</scope>
    <source>
        <strain>ATCC 29342 / M129 / Subtype 1</strain>
    </source>
</reference>
<name>Y570_MYCPN</name>
<sequence>MKQKIIGLTLAFFVLFLTAVAILFTVKVQRYLTTSLWAKLSEQTFLVFKNEQDEAQFNQVSWTNFQAETTKKEDKKAFRLYKKKISLEQLENENQQQLFQAVNLSINLKQGWYNITILLPSKALFETVF</sequence>
<comment type="subcellular location">
    <subcellularLocation>
        <location evidence="2">Membrane</location>
        <topology evidence="2">Single-pass membrane protein</topology>
    </subcellularLocation>
</comment>
<organism>
    <name type="scientific">Mycoplasma pneumoniae (strain ATCC 29342 / M129 / Subtype 1)</name>
    <name type="common">Mycoplasmoides pneumoniae</name>
    <dbReference type="NCBI Taxonomy" id="272634"/>
    <lineage>
        <taxon>Bacteria</taxon>
        <taxon>Bacillati</taxon>
        <taxon>Mycoplasmatota</taxon>
        <taxon>Mycoplasmoidales</taxon>
        <taxon>Mycoplasmoidaceae</taxon>
        <taxon>Mycoplasmoides</taxon>
    </lineage>
</organism>
<proteinExistence type="predicted"/>
<gene>
    <name type="ordered locus">MPN_570</name>
    <name type="ORF">D02_orf129</name>
    <name type="ORF">MP272</name>
</gene>
<protein>
    <recommendedName>
        <fullName>Uncharacterized protein MG389 homolog</fullName>
    </recommendedName>
</protein>
<keyword id="KW-0472">Membrane</keyword>
<keyword id="KW-1185">Reference proteome</keyword>
<keyword id="KW-0812">Transmembrane</keyword>
<keyword id="KW-1133">Transmembrane helix</keyword>
<feature type="chain" id="PRO_0000210591" description="Uncharacterized protein MG389 homolog">
    <location>
        <begin position="1"/>
        <end position="129"/>
    </location>
</feature>
<feature type="transmembrane region" description="Helical" evidence="1">
    <location>
        <begin position="5"/>
        <end position="25"/>
    </location>
</feature>
<evidence type="ECO:0000255" key="1"/>
<evidence type="ECO:0000305" key="2"/>